<comment type="similarity">
    <text evidence="3">Belongs to the TRAFAC class myosin-kinesin ATPase superfamily. Kinesin family. KIN-10 subfamily.</text>
</comment>
<comment type="caution">
    <text evidence="4">Lacks the ATP-binding motif which is one of the conserved features of the kinesin family.</text>
</comment>
<comment type="sequence caution" evidence="4">
    <conflict type="erroneous gene model prediction">
        <sequence resource="EMBL-CDS" id="EEE60854"/>
    </conflict>
</comment>
<keyword id="KW-0493">Microtubule</keyword>
<keyword id="KW-0505">Motor protein</keyword>
<keyword id="KW-1185">Reference proteome</keyword>
<organism>
    <name type="scientific">Oryza sativa subsp. japonica</name>
    <name type="common">Rice</name>
    <dbReference type="NCBI Taxonomy" id="39947"/>
    <lineage>
        <taxon>Eukaryota</taxon>
        <taxon>Viridiplantae</taxon>
        <taxon>Streptophyta</taxon>
        <taxon>Embryophyta</taxon>
        <taxon>Tracheophyta</taxon>
        <taxon>Spermatophyta</taxon>
        <taxon>Magnoliopsida</taxon>
        <taxon>Liliopsida</taxon>
        <taxon>Poales</taxon>
        <taxon>Poaceae</taxon>
        <taxon>BOP clade</taxon>
        <taxon>Oryzoideae</taxon>
        <taxon>Oryzeae</taxon>
        <taxon>Oryzinae</taxon>
        <taxon>Oryza</taxon>
        <taxon>Oryza sativa</taxon>
    </lineage>
</organism>
<gene>
    <name evidence="4" type="primary">KIN10B</name>
    <name evidence="5" type="ordered locus">Os04g0375900</name>
    <name evidence="4" type="ordered locus">LOC_Os04g30720</name>
    <name evidence="7" type="ORF">OsJ_14489</name>
    <name evidence="6" type="ORF">OSJNBb0006N15.7</name>
</gene>
<protein>
    <recommendedName>
        <fullName evidence="4">Kinesin-like protein KIN-10B</fullName>
    </recommendedName>
</protein>
<reference key="1">
    <citation type="journal article" date="2002" name="Nature">
        <title>Sequence and analysis of rice chromosome 4.</title>
        <authorList>
            <person name="Feng Q."/>
            <person name="Zhang Y."/>
            <person name="Hao P."/>
            <person name="Wang S."/>
            <person name="Fu G."/>
            <person name="Huang Y."/>
            <person name="Li Y."/>
            <person name="Zhu J."/>
            <person name="Liu Y."/>
            <person name="Hu X."/>
            <person name="Jia P."/>
            <person name="Zhang Y."/>
            <person name="Zhao Q."/>
            <person name="Ying K."/>
            <person name="Yu S."/>
            <person name="Tang Y."/>
            <person name="Weng Q."/>
            <person name="Zhang L."/>
            <person name="Lu Y."/>
            <person name="Mu J."/>
            <person name="Lu Y."/>
            <person name="Zhang L.S."/>
            <person name="Yu Z."/>
            <person name="Fan D."/>
            <person name="Liu X."/>
            <person name="Lu T."/>
            <person name="Li C."/>
            <person name="Wu Y."/>
            <person name="Sun T."/>
            <person name="Lei H."/>
            <person name="Li T."/>
            <person name="Hu H."/>
            <person name="Guan J."/>
            <person name="Wu M."/>
            <person name="Zhang R."/>
            <person name="Zhou B."/>
            <person name="Chen Z."/>
            <person name="Chen L."/>
            <person name="Jin Z."/>
            <person name="Wang R."/>
            <person name="Yin H."/>
            <person name="Cai Z."/>
            <person name="Ren S."/>
            <person name="Lv G."/>
            <person name="Gu W."/>
            <person name="Zhu G."/>
            <person name="Tu Y."/>
            <person name="Jia J."/>
            <person name="Zhang Y."/>
            <person name="Chen J."/>
            <person name="Kang H."/>
            <person name="Chen X."/>
            <person name="Shao C."/>
            <person name="Sun Y."/>
            <person name="Hu Q."/>
            <person name="Zhang X."/>
            <person name="Zhang W."/>
            <person name="Wang L."/>
            <person name="Ding C."/>
            <person name="Sheng H."/>
            <person name="Gu J."/>
            <person name="Chen S."/>
            <person name="Ni L."/>
            <person name="Zhu F."/>
            <person name="Chen W."/>
            <person name="Lan L."/>
            <person name="Lai Y."/>
            <person name="Cheng Z."/>
            <person name="Gu M."/>
            <person name="Jiang J."/>
            <person name="Li J."/>
            <person name="Hong G."/>
            <person name="Xue Y."/>
            <person name="Han B."/>
        </authorList>
    </citation>
    <scope>NUCLEOTIDE SEQUENCE [LARGE SCALE GENOMIC DNA]</scope>
    <source>
        <strain>cv. Nipponbare</strain>
    </source>
</reference>
<reference key="2">
    <citation type="journal article" date="2005" name="Nature">
        <title>The map-based sequence of the rice genome.</title>
        <authorList>
            <consortium name="International rice genome sequencing project (IRGSP)"/>
        </authorList>
    </citation>
    <scope>NUCLEOTIDE SEQUENCE [LARGE SCALE GENOMIC DNA]</scope>
    <source>
        <strain>cv. Nipponbare</strain>
    </source>
</reference>
<reference key="3">
    <citation type="journal article" date="2008" name="Nucleic Acids Res.">
        <title>The rice annotation project database (RAP-DB): 2008 update.</title>
        <authorList>
            <consortium name="The rice annotation project (RAP)"/>
        </authorList>
    </citation>
    <scope>GENOME REANNOTATION</scope>
    <source>
        <strain>cv. Nipponbare</strain>
    </source>
</reference>
<reference key="4">
    <citation type="journal article" date="2013" name="Rice">
        <title>Improvement of the Oryza sativa Nipponbare reference genome using next generation sequence and optical map data.</title>
        <authorList>
            <person name="Kawahara Y."/>
            <person name="de la Bastide M."/>
            <person name="Hamilton J.P."/>
            <person name="Kanamori H."/>
            <person name="McCombie W.R."/>
            <person name="Ouyang S."/>
            <person name="Schwartz D.C."/>
            <person name="Tanaka T."/>
            <person name="Wu J."/>
            <person name="Zhou S."/>
            <person name="Childs K.L."/>
            <person name="Davidson R.M."/>
            <person name="Lin H."/>
            <person name="Quesada-Ocampo L."/>
            <person name="Vaillancourt B."/>
            <person name="Sakai H."/>
            <person name="Lee S.S."/>
            <person name="Kim J."/>
            <person name="Numa H."/>
            <person name="Itoh T."/>
            <person name="Buell C.R."/>
            <person name="Matsumoto T."/>
        </authorList>
    </citation>
    <scope>GENOME REANNOTATION</scope>
    <source>
        <strain>cv. Nipponbare</strain>
    </source>
</reference>
<reference key="5">
    <citation type="journal article" date="2005" name="PLoS Biol.">
        <title>The genomes of Oryza sativa: a history of duplications.</title>
        <authorList>
            <person name="Yu J."/>
            <person name="Wang J."/>
            <person name="Lin W."/>
            <person name="Li S."/>
            <person name="Li H."/>
            <person name="Zhou J."/>
            <person name="Ni P."/>
            <person name="Dong W."/>
            <person name="Hu S."/>
            <person name="Zeng C."/>
            <person name="Zhang J."/>
            <person name="Zhang Y."/>
            <person name="Li R."/>
            <person name="Xu Z."/>
            <person name="Li S."/>
            <person name="Li X."/>
            <person name="Zheng H."/>
            <person name="Cong L."/>
            <person name="Lin L."/>
            <person name="Yin J."/>
            <person name="Geng J."/>
            <person name="Li G."/>
            <person name="Shi J."/>
            <person name="Liu J."/>
            <person name="Lv H."/>
            <person name="Li J."/>
            <person name="Wang J."/>
            <person name="Deng Y."/>
            <person name="Ran L."/>
            <person name="Shi X."/>
            <person name="Wang X."/>
            <person name="Wu Q."/>
            <person name="Li C."/>
            <person name="Ren X."/>
            <person name="Wang J."/>
            <person name="Wang X."/>
            <person name="Li D."/>
            <person name="Liu D."/>
            <person name="Zhang X."/>
            <person name="Ji Z."/>
            <person name="Zhao W."/>
            <person name="Sun Y."/>
            <person name="Zhang Z."/>
            <person name="Bao J."/>
            <person name="Han Y."/>
            <person name="Dong L."/>
            <person name="Ji J."/>
            <person name="Chen P."/>
            <person name="Wu S."/>
            <person name="Liu J."/>
            <person name="Xiao Y."/>
            <person name="Bu D."/>
            <person name="Tan J."/>
            <person name="Yang L."/>
            <person name="Ye C."/>
            <person name="Zhang J."/>
            <person name="Xu J."/>
            <person name="Zhou Y."/>
            <person name="Yu Y."/>
            <person name="Zhang B."/>
            <person name="Zhuang S."/>
            <person name="Wei H."/>
            <person name="Liu B."/>
            <person name="Lei M."/>
            <person name="Yu H."/>
            <person name="Li Y."/>
            <person name="Xu H."/>
            <person name="Wei S."/>
            <person name="He X."/>
            <person name="Fang L."/>
            <person name="Zhang Z."/>
            <person name="Zhang Y."/>
            <person name="Huang X."/>
            <person name="Su Z."/>
            <person name="Tong W."/>
            <person name="Li J."/>
            <person name="Tong Z."/>
            <person name="Li S."/>
            <person name="Ye J."/>
            <person name="Wang L."/>
            <person name="Fang L."/>
            <person name="Lei T."/>
            <person name="Chen C.-S."/>
            <person name="Chen H.-C."/>
            <person name="Xu Z."/>
            <person name="Li H."/>
            <person name="Huang H."/>
            <person name="Zhang F."/>
            <person name="Xu H."/>
            <person name="Li N."/>
            <person name="Zhao C."/>
            <person name="Li S."/>
            <person name="Dong L."/>
            <person name="Huang Y."/>
            <person name="Li L."/>
            <person name="Xi Y."/>
            <person name="Qi Q."/>
            <person name="Li W."/>
            <person name="Zhang B."/>
            <person name="Hu W."/>
            <person name="Zhang Y."/>
            <person name="Tian X."/>
            <person name="Jiao Y."/>
            <person name="Liang X."/>
            <person name="Jin J."/>
            <person name="Gao L."/>
            <person name="Zheng W."/>
            <person name="Hao B."/>
            <person name="Liu S.-M."/>
            <person name="Wang W."/>
            <person name="Yuan L."/>
            <person name="Cao M."/>
            <person name="McDermott J."/>
            <person name="Samudrala R."/>
            <person name="Wang J."/>
            <person name="Wong G.K.-S."/>
            <person name="Yang H."/>
        </authorList>
    </citation>
    <scope>NUCLEOTIDE SEQUENCE [LARGE SCALE GENOMIC DNA]</scope>
    <source>
        <strain>cv. Nipponbare</strain>
    </source>
</reference>
<reference key="6">
    <citation type="journal article" date="2003" name="Science">
        <title>Collection, mapping, and annotation of over 28,000 cDNA clones from japonica rice.</title>
        <authorList>
            <consortium name="The rice full-length cDNA consortium"/>
        </authorList>
    </citation>
    <scope>NUCLEOTIDE SEQUENCE [LARGE SCALE MRNA]</scope>
    <source>
        <strain>cv. Nipponbare</strain>
    </source>
</reference>
<reference key="7">
    <citation type="journal article" date="2009" name="Ann. Bot.">
        <title>Evaluating the microtubule cytoskeleton and its interacting proteins in monocots by mining the rice genome.</title>
        <authorList>
            <person name="Guo L."/>
            <person name="Ho C.M."/>
            <person name="Kong Z."/>
            <person name="Lee Y.R."/>
            <person name="Qian Q."/>
            <person name="Liu B."/>
        </authorList>
    </citation>
    <scope>GENE FAMILY</scope>
    <scope>NOMENCLATURE</scope>
</reference>
<dbReference type="EMBL" id="AL607003">
    <property type="protein sequence ID" value="CAE04590.2"/>
    <property type="molecule type" value="Genomic_DNA"/>
</dbReference>
<dbReference type="EMBL" id="AP008210">
    <property type="protein sequence ID" value="BAF14491.1"/>
    <property type="molecule type" value="Genomic_DNA"/>
</dbReference>
<dbReference type="EMBL" id="AP014960">
    <property type="protein sequence ID" value="BAS88849.1"/>
    <property type="molecule type" value="Genomic_DNA"/>
</dbReference>
<dbReference type="EMBL" id="CM000141">
    <property type="protein sequence ID" value="EEE60854.1"/>
    <property type="status" value="ALT_SEQ"/>
    <property type="molecule type" value="Genomic_DNA"/>
</dbReference>
<dbReference type="EMBL" id="AK101769">
    <property type="status" value="NOT_ANNOTATED_CDS"/>
    <property type="molecule type" value="mRNA"/>
</dbReference>
<dbReference type="RefSeq" id="XP_015634356.1">
    <property type="nucleotide sequence ID" value="XM_015778870.1"/>
</dbReference>
<dbReference type="SMR" id="Q7XMJ2"/>
<dbReference type="FunCoup" id="Q7XMJ2">
    <property type="interactions" value="1"/>
</dbReference>
<dbReference type="STRING" id="39947.Q7XMJ2"/>
<dbReference type="PaxDb" id="39947-Q7XMJ2"/>
<dbReference type="EnsemblPlants" id="Os04t0375900-01">
    <property type="protein sequence ID" value="Os04t0375900-01"/>
    <property type="gene ID" value="Os04g0375900"/>
</dbReference>
<dbReference type="Gramene" id="Os04t0375900-01">
    <property type="protein sequence ID" value="Os04t0375900-01"/>
    <property type="gene ID" value="Os04g0375900"/>
</dbReference>
<dbReference type="KEGG" id="dosa:Os04g0375900"/>
<dbReference type="eggNOG" id="KOG0239">
    <property type="taxonomic scope" value="Eukaryota"/>
</dbReference>
<dbReference type="eggNOG" id="KOG0242">
    <property type="taxonomic scope" value="Eukaryota"/>
</dbReference>
<dbReference type="HOGENOM" id="CLU_001485_27_2_1"/>
<dbReference type="InParanoid" id="Q7XMJ2"/>
<dbReference type="OMA" id="CTPWKTF"/>
<dbReference type="OrthoDB" id="3176171at2759"/>
<dbReference type="Proteomes" id="UP000000763">
    <property type="component" value="Chromosome 4"/>
</dbReference>
<dbReference type="Proteomes" id="UP000007752">
    <property type="component" value="Chromosome 4"/>
</dbReference>
<dbReference type="Proteomes" id="UP000059680">
    <property type="component" value="Chromosome 4"/>
</dbReference>
<dbReference type="GO" id="GO:0005737">
    <property type="term" value="C:cytoplasm"/>
    <property type="evidence" value="ECO:0000318"/>
    <property type="project" value="GO_Central"/>
</dbReference>
<dbReference type="GO" id="GO:0005871">
    <property type="term" value="C:kinesin complex"/>
    <property type="evidence" value="ECO:0000318"/>
    <property type="project" value="GO_Central"/>
</dbReference>
<dbReference type="GO" id="GO:0005874">
    <property type="term" value="C:microtubule"/>
    <property type="evidence" value="ECO:0000318"/>
    <property type="project" value="GO_Central"/>
</dbReference>
<dbReference type="GO" id="GO:0005524">
    <property type="term" value="F:ATP binding"/>
    <property type="evidence" value="ECO:0007669"/>
    <property type="project" value="InterPro"/>
</dbReference>
<dbReference type="GO" id="GO:0016887">
    <property type="term" value="F:ATP hydrolysis activity"/>
    <property type="evidence" value="ECO:0000318"/>
    <property type="project" value="GO_Central"/>
</dbReference>
<dbReference type="GO" id="GO:0008017">
    <property type="term" value="F:microtubule binding"/>
    <property type="evidence" value="ECO:0000318"/>
    <property type="project" value="GO_Central"/>
</dbReference>
<dbReference type="GO" id="GO:0003777">
    <property type="term" value="F:microtubule motor activity"/>
    <property type="evidence" value="ECO:0000318"/>
    <property type="project" value="GO_Central"/>
</dbReference>
<dbReference type="GO" id="GO:0007018">
    <property type="term" value="P:microtubule-based movement"/>
    <property type="evidence" value="ECO:0000318"/>
    <property type="project" value="GO_Central"/>
</dbReference>
<dbReference type="FunFam" id="1.10.150.280:FF:000003">
    <property type="entry name" value="Kinesin-like protein KIN-10C"/>
    <property type="match status" value="1"/>
</dbReference>
<dbReference type="FunFam" id="3.40.850.10:FF:000098">
    <property type="entry name" value="Kinesin-like protein KIN-10C"/>
    <property type="match status" value="1"/>
</dbReference>
<dbReference type="Gene3D" id="1.10.150.280">
    <property type="entry name" value="AF1531-like domain"/>
    <property type="match status" value="1"/>
</dbReference>
<dbReference type="Gene3D" id="3.40.850.10">
    <property type="entry name" value="Kinesin motor domain"/>
    <property type="match status" value="1"/>
</dbReference>
<dbReference type="InterPro" id="IPR027640">
    <property type="entry name" value="Kinesin-like_fam"/>
</dbReference>
<dbReference type="InterPro" id="IPR001752">
    <property type="entry name" value="Kinesin_motor_dom"/>
</dbReference>
<dbReference type="InterPro" id="IPR036961">
    <property type="entry name" value="Kinesin_motor_dom_sf"/>
</dbReference>
<dbReference type="InterPro" id="IPR027417">
    <property type="entry name" value="P-loop_NTPase"/>
</dbReference>
<dbReference type="InterPro" id="IPR010994">
    <property type="entry name" value="RuvA_2-like"/>
</dbReference>
<dbReference type="PANTHER" id="PTHR24115:SF908">
    <property type="entry name" value="KINESIN-LIKE PROTEIN KIN-10C"/>
    <property type="match status" value="1"/>
</dbReference>
<dbReference type="PANTHER" id="PTHR24115">
    <property type="entry name" value="KINESIN-RELATED"/>
    <property type="match status" value="1"/>
</dbReference>
<dbReference type="Pfam" id="PF12836">
    <property type="entry name" value="HHH_3"/>
    <property type="match status" value="1"/>
</dbReference>
<dbReference type="Pfam" id="PF00225">
    <property type="entry name" value="Kinesin"/>
    <property type="match status" value="1"/>
</dbReference>
<dbReference type="PRINTS" id="PR00380">
    <property type="entry name" value="KINESINHEAVY"/>
</dbReference>
<dbReference type="SMART" id="SM00129">
    <property type="entry name" value="KISc"/>
    <property type="match status" value="1"/>
</dbReference>
<dbReference type="SUPFAM" id="SSF52540">
    <property type="entry name" value="P-loop containing nucleoside triphosphate hydrolases"/>
    <property type="match status" value="1"/>
</dbReference>
<dbReference type="SUPFAM" id="SSF47781">
    <property type="entry name" value="RuvA domain 2-like"/>
    <property type="match status" value="1"/>
</dbReference>
<dbReference type="PROSITE" id="PS50067">
    <property type="entry name" value="KINESIN_MOTOR_2"/>
    <property type="match status" value="1"/>
</dbReference>
<sequence>MEQQQKQEPGGGGGGVRVVARICPCAPPPPPPDAALNFQVAALNDPALISFIPRRPTASAATAAASGRGDGPKDKQQQQQQKYRVDGCYLRDDPNHRVFHNEVKPLIDGRGGGGGGRGGAKACVVACGDAAAKRHLFMGSPDQPGLFTMAMAQLLDSSKAIGAAVTVSSYQVLQDTHILDLLEPKNHEVLILEDADGQTHLKGLSRVGVNSIEEFSQLCCCATNQQRHHPAKDSTQLQDWGHQGLIIYVSSFDQQGKECALAKINFLNLAGYVDPKQKKNEGLALLTGNKSMHALMNVVQALNSNQRFVPYRQSKVTRILQDSLCKSKTSGSVLIACLAEDCCQDSVSTLALASRSSQVVNEQYYSLSLSAKKSSKSNMNLPTDAKTLSRTFIHKTMSMQEKNARPGFNNSGVKGGQTPTANRRTQPIISSTKKSGSSICTSIKMKENYAKPKISGRKLFCPSNNSLKEENATDVASTVVTETKSATVRIQADEVQPLVGMEIRAALLNEGCSEIGNTGDVKSSEMQEVVHCSTQELLASTIQEEDYALSNMEPENSCTDMGLTCSSITDNLVEKTPASSTLSSPKLSDRLREISNSLKLLSTRPVSVRAEKWDIECARRINTIAPEPKTPEVHLKFEQAEDPKDKLTARSTGIKKSLAQECLTFLNSANKEQLKSLKGIGDKRANYILELREESPELFKEISDLRDIIGMNSKEIKKMMSGIIDP</sequence>
<proteinExistence type="evidence at transcript level"/>
<evidence type="ECO:0000255" key="1">
    <source>
        <dbReference type="PROSITE-ProRule" id="PRU00283"/>
    </source>
</evidence>
<evidence type="ECO:0000256" key="2">
    <source>
        <dbReference type="SAM" id="MobiDB-lite"/>
    </source>
</evidence>
<evidence type="ECO:0000303" key="3">
    <source>
    </source>
</evidence>
<evidence type="ECO:0000305" key="4"/>
<evidence type="ECO:0000312" key="5">
    <source>
        <dbReference type="EMBL" id="BAS88849.1"/>
    </source>
</evidence>
<evidence type="ECO:0000312" key="6">
    <source>
        <dbReference type="EMBL" id="CAE04590.2"/>
    </source>
</evidence>
<evidence type="ECO:0000312" key="7">
    <source>
        <dbReference type="EMBL" id="EEE60854.1"/>
    </source>
</evidence>
<feature type="chain" id="PRO_0000437036" description="Kinesin-like protein KIN-10B">
    <location>
        <begin position="1"/>
        <end position="726"/>
    </location>
</feature>
<feature type="domain" description="Kinesin motor" evidence="1">
    <location>
        <begin position="15"/>
        <end position="359"/>
    </location>
</feature>
<feature type="region of interest" description="Disordered" evidence="2">
    <location>
        <begin position="1"/>
        <end position="20"/>
    </location>
</feature>
<feature type="region of interest" description="Disordered" evidence="2">
    <location>
        <begin position="60"/>
        <end position="82"/>
    </location>
</feature>
<feature type="region of interest" description="Disordered" evidence="2">
    <location>
        <begin position="402"/>
        <end position="423"/>
    </location>
</feature>
<feature type="compositionally biased region" description="Polar residues" evidence="2">
    <location>
        <begin position="408"/>
        <end position="423"/>
    </location>
</feature>
<feature type="sequence conflict" description="In Ref. 6; AK101769." evidence="4" ref="6">
    <original>L</original>
    <variation>V</variation>
    <location>
        <position position="705"/>
    </location>
</feature>
<accession>Q7XMJ2</accession>
<accession>B9FES1</accession>
<name>KN10B_ORYSJ</name>